<protein>
    <recommendedName>
        <fullName evidence="1">Ribosome-recycling factor</fullName>
        <shortName evidence="1">RRF</shortName>
    </recommendedName>
    <alternativeName>
        <fullName evidence="1">Ribosome-releasing factor</fullName>
    </alternativeName>
</protein>
<name>RRF_RICAE</name>
<reference key="1">
    <citation type="journal article" date="2009" name="BMC Genomics">
        <title>Analysis of the Rickettsia africae genome reveals that virulence acquisition in Rickettsia species may be explained by genome reduction.</title>
        <authorList>
            <person name="Fournier P.-E."/>
            <person name="El Karkouri K."/>
            <person name="Leroy Q."/>
            <person name="Robert C."/>
            <person name="Giumelli B."/>
            <person name="Renesto P."/>
            <person name="Socolovschi C."/>
            <person name="Parola P."/>
            <person name="Audic S."/>
            <person name="Raoult D."/>
        </authorList>
    </citation>
    <scope>NUCLEOTIDE SEQUENCE [LARGE SCALE GENOMIC DNA]</scope>
    <source>
        <strain>ESF-5</strain>
    </source>
</reference>
<evidence type="ECO:0000255" key="1">
    <source>
        <dbReference type="HAMAP-Rule" id="MF_00040"/>
    </source>
</evidence>
<organism>
    <name type="scientific">Rickettsia africae (strain ESF-5)</name>
    <dbReference type="NCBI Taxonomy" id="347255"/>
    <lineage>
        <taxon>Bacteria</taxon>
        <taxon>Pseudomonadati</taxon>
        <taxon>Pseudomonadota</taxon>
        <taxon>Alphaproteobacteria</taxon>
        <taxon>Rickettsiales</taxon>
        <taxon>Rickettsiaceae</taxon>
        <taxon>Rickettsieae</taxon>
        <taxon>Rickettsia</taxon>
        <taxon>spotted fever group</taxon>
    </lineage>
</organism>
<dbReference type="EMBL" id="CP001612">
    <property type="protein sequence ID" value="ACP53153.1"/>
    <property type="molecule type" value="Genomic_DNA"/>
</dbReference>
<dbReference type="RefSeq" id="WP_012719423.1">
    <property type="nucleotide sequence ID" value="NC_012633.1"/>
</dbReference>
<dbReference type="SMR" id="C3PMJ3"/>
<dbReference type="KEGG" id="raf:RAF_ORF0186"/>
<dbReference type="HOGENOM" id="CLU_073981_2_1_5"/>
<dbReference type="Proteomes" id="UP000002305">
    <property type="component" value="Chromosome"/>
</dbReference>
<dbReference type="GO" id="GO:0005829">
    <property type="term" value="C:cytosol"/>
    <property type="evidence" value="ECO:0007669"/>
    <property type="project" value="GOC"/>
</dbReference>
<dbReference type="GO" id="GO:0043023">
    <property type="term" value="F:ribosomal large subunit binding"/>
    <property type="evidence" value="ECO:0007669"/>
    <property type="project" value="TreeGrafter"/>
</dbReference>
<dbReference type="GO" id="GO:0002184">
    <property type="term" value="P:cytoplasmic translational termination"/>
    <property type="evidence" value="ECO:0007669"/>
    <property type="project" value="TreeGrafter"/>
</dbReference>
<dbReference type="CDD" id="cd00520">
    <property type="entry name" value="RRF"/>
    <property type="match status" value="1"/>
</dbReference>
<dbReference type="FunFam" id="1.10.132.20:FF:000001">
    <property type="entry name" value="Ribosome-recycling factor"/>
    <property type="match status" value="1"/>
</dbReference>
<dbReference type="FunFam" id="3.30.1360.40:FF:000001">
    <property type="entry name" value="Ribosome-recycling factor"/>
    <property type="match status" value="1"/>
</dbReference>
<dbReference type="Gene3D" id="3.30.1360.40">
    <property type="match status" value="1"/>
</dbReference>
<dbReference type="Gene3D" id="1.10.132.20">
    <property type="entry name" value="Ribosome-recycling factor"/>
    <property type="match status" value="1"/>
</dbReference>
<dbReference type="HAMAP" id="MF_00040">
    <property type="entry name" value="RRF"/>
    <property type="match status" value="1"/>
</dbReference>
<dbReference type="InterPro" id="IPR002661">
    <property type="entry name" value="Ribosome_recyc_fac"/>
</dbReference>
<dbReference type="InterPro" id="IPR023584">
    <property type="entry name" value="Ribosome_recyc_fac_dom"/>
</dbReference>
<dbReference type="InterPro" id="IPR036191">
    <property type="entry name" value="RRF_sf"/>
</dbReference>
<dbReference type="NCBIfam" id="TIGR00496">
    <property type="entry name" value="frr"/>
    <property type="match status" value="1"/>
</dbReference>
<dbReference type="PANTHER" id="PTHR20982:SF3">
    <property type="entry name" value="MITOCHONDRIAL RIBOSOME RECYCLING FACTOR PSEUDO 1"/>
    <property type="match status" value="1"/>
</dbReference>
<dbReference type="PANTHER" id="PTHR20982">
    <property type="entry name" value="RIBOSOME RECYCLING FACTOR"/>
    <property type="match status" value="1"/>
</dbReference>
<dbReference type="Pfam" id="PF01765">
    <property type="entry name" value="RRF"/>
    <property type="match status" value="1"/>
</dbReference>
<dbReference type="SUPFAM" id="SSF55194">
    <property type="entry name" value="Ribosome recycling factor, RRF"/>
    <property type="match status" value="1"/>
</dbReference>
<gene>
    <name evidence="1" type="primary">frr</name>
    <name type="ordered locus">RAF_ORF0186</name>
</gene>
<proteinExistence type="inferred from homology"/>
<sequence>MDKEHLKKNLQEKMEKALKVLDHELKGLRTGRASVNLLDSVTVEAYGSKMPLSQVASLSTPDARTINVQVWDKSMVSSVEKGITIANLGLTPATDGQLIRLPIPALTEERRTELVKLAHKYGEDTKISLRNIRRDGNEALKKLAKDNVIAKDEHHSLSEQVQKLTDDYSNKVDSVIKQKEQEIMTV</sequence>
<comment type="function">
    <text evidence="1">Responsible for the release of ribosomes from messenger RNA at the termination of protein biosynthesis. May increase the efficiency of translation by recycling ribosomes from one round of translation to another.</text>
</comment>
<comment type="subcellular location">
    <subcellularLocation>
        <location evidence="1">Cytoplasm</location>
    </subcellularLocation>
</comment>
<comment type="similarity">
    <text evidence="1">Belongs to the RRF family.</text>
</comment>
<feature type="chain" id="PRO_1000202109" description="Ribosome-recycling factor">
    <location>
        <begin position="1"/>
        <end position="186"/>
    </location>
</feature>
<accession>C3PMJ3</accession>
<keyword id="KW-0963">Cytoplasm</keyword>
<keyword id="KW-0648">Protein biosynthesis</keyword>